<reference key="1">
    <citation type="submission" date="2007-06" db="EMBL/GenBank/DDBJ databases">
        <authorList>
            <person name="Dodson R.J."/>
            <person name="Harkins D."/>
            <person name="Paulsen I.T."/>
        </authorList>
    </citation>
    <scope>NUCLEOTIDE SEQUENCE [LARGE SCALE GENOMIC DNA]</scope>
    <source>
        <strain>DSM 24068 / PA7</strain>
    </source>
</reference>
<protein>
    <recommendedName>
        <fullName evidence="1">Ureidoglycolate lyase</fullName>
        <ecNumber evidence="1">4.3.2.3</ecNumber>
    </recommendedName>
    <alternativeName>
        <fullName evidence="1">Ureidoglycolatase</fullName>
    </alternativeName>
</protein>
<gene>
    <name evidence="1" type="primary">allA</name>
    <name type="ordered locus">PSPA7_3821</name>
</gene>
<comment type="function">
    <text evidence="1">Catalyzes the catabolism of the allantoin degradation intermediate (S)-ureidoglycolate, generating urea and glyoxylate. Involved in the utilization of allantoin as nitrogen source.</text>
</comment>
<comment type="catalytic activity">
    <reaction evidence="1">
        <text>(S)-ureidoglycolate = urea + glyoxylate</text>
        <dbReference type="Rhea" id="RHEA:11304"/>
        <dbReference type="ChEBI" id="CHEBI:16199"/>
        <dbReference type="ChEBI" id="CHEBI:36655"/>
        <dbReference type="ChEBI" id="CHEBI:57296"/>
        <dbReference type="EC" id="4.3.2.3"/>
    </reaction>
</comment>
<comment type="cofactor">
    <cofactor evidence="1">
        <name>Ni(2+)</name>
        <dbReference type="ChEBI" id="CHEBI:49786"/>
    </cofactor>
</comment>
<comment type="pathway">
    <text evidence="1">Nitrogen metabolism; (S)-allantoin degradation.</text>
</comment>
<comment type="subunit">
    <text evidence="1">Homodimer.</text>
</comment>
<comment type="similarity">
    <text evidence="1">Belongs to the ureidoglycolate lyase family.</text>
</comment>
<evidence type="ECO:0000255" key="1">
    <source>
        <dbReference type="HAMAP-Rule" id="MF_00616"/>
    </source>
</evidence>
<organism>
    <name type="scientific">Pseudomonas paraeruginosa (strain DSM 24068 / PA7)</name>
    <name type="common">Pseudomonas aeruginosa (strain PA7)</name>
    <dbReference type="NCBI Taxonomy" id="381754"/>
    <lineage>
        <taxon>Bacteria</taxon>
        <taxon>Pseudomonadati</taxon>
        <taxon>Pseudomonadota</taxon>
        <taxon>Gammaproteobacteria</taxon>
        <taxon>Pseudomonadales</taxon>
        <taxon>Pseudomonadaceae</taxon>
        <taxon>Pseudomonas</taxon>
        <taxon>Pseudomonas paraeruginosa</taxon>
    </lineage>
</organism>
<name>ALLA_PSEP7</name>
<feature type="chain" id="PRO_1000061359" description="Ureidoglycolate lyase">
    <location>
        <begin position="1"/>
        <end position="169"/>
    </location>
</feature>
<proteinExistence type="inferred from homology"/>
<keyword id="KW-0456">Lyase</keyword>
<keyword id="KW-0659">Purine metabolism</keyword>
<sequence>MRTLKIEPLTKEAFAPFGDVIETEGSDYFMINNGSTRRYHKLATVETAQPEDNAIISIFSAEKLEMPLRIRMLERHPLGSQAFIPLLGNPFLVVVAPLGDVPVPGLVRAFLTNGRQGVNYHRGVWHHPVLTIEKRDDFLVVDRSGSGNNCDEHFFTEDEQLLLDPQSNQ</sequence>
<dbReference type="EC" id="4.3.2.3" evidence="1"/>
<dbReference type="EMBL" id="CP000744">
    <property type="protein sequence ID" value="ABR80926.1"/>
    <property type="molecule type" value="Genomic_DNA"/>
</dbReference>
<dbReference type="RefSeq" id="WP_003150460.1">
    <property type="nucleotide sequence ID" value="NC_009656.1"/>
</dbReference>
<dbReference type="SMR" id="A6V7Z0"/>
<dbReference type="GeneID" id="77221876"/>
<dbReference type="KEGG" id="pap:PSPA7_3821"/>
<dbReference type="HOGENOM" id="CLU_070848_1_0_6"/>
<dbReference type="UniPathway" id="UPA00395"/>
<dbReference type="Proteomes" id="UP000001582">
    <property type="component" value="Chromosome"/>
</dbReference>
<dbReference type="GO" id="GO:0004848">
    <property type="term" value="F:ureidoglycolate hydrolase activity"/>
    <property type="evidence" value="ECO:0007669"/>
    <property type="project" value="InterPro"/>
</dbReference>
<dbReference type="GO" id="GO:0050385">
    <property type="term" value="F:ureidoglycolate lyase activity"/>
    <property type="evidence" value="ECO:0007669"/>
    <property type="project" value="UniProtKB-UniRule"/>
</dbReference>
<dbReference type="GO" id="GO:0000256">
    <property type="term" value="P:allantoin catabolic process"/>
    <property type="evidence" value="ECO:0007669"/>
    <property type="project" value="UniProtKB-UniRule"/>
</dbReference>
<dbReference type="GO" id="GO:0006145">
    <property type="term" value="P:purine nucleobase catabolic process"/>
    <property type="evidence" value="ECO:0007669"/>
    <property type="project" value="UniProtKB-UniRule"/>
</dbReference>
<dbReference type="CDD" id="cd20298">
    <property type="entry name" value="cupin_UAH"/>
    <property type="match status" value="1"/>
</dbReference>
<dbReference type="FunFam" id="2.60.120.480:FF:000001">
    <property type="entry name" value="Ureidoglycolate lyase"/>
    <property type="match status" value="1"/>
</dbReference>
<dbReference type="Gene3D" id="2.60.120.480">
    <property type="entry name" value="Ureidoglycolate hydrolase"/>
    <property type="match status" value="1"/>
</dbReference>
<dbReference type="HAMAP" id="MF_00616">
    <property type="entry name" value="Ureidogly_lyase"/>
    <property type="match status" value="1"/>
</dbReference>
<dbReference type="InterPro" id="IPR011051">
    <property type="entry name" value="RmlC_Cupin_sf"/>
</dbReference>
<dbReference type="InterPro" id="IPR047233">
    <property type="entry name" value="UAH_cupin"/>
</dbReference>
<dbReference type="InterPro" id="IPR007247">
    <property type="entry name" value="Ureidogly_lyase"/>
</dbReference>
<dbReference type="InterPro" id="IPR023525">
    <property type="entry name" value="Ureidogly_lyase_bac"/>
</dbReference>
<dbReference type="InterPro" id="IPR024060">
    <property type="entry name" value="Ureidoglycolate_lyase_dom_sf"/>
</dbReference>
<dbReference type="NCBIfam" id="NF002949">
    <property type="entry name" value="PRK03606.1-2"/>
    <property type="match status" value="1"/>
</dbReference>
<dbReference type="NCBIfam" id="NF009932">
    <property type="entry name" value="PRK13395.1"/>
    <property type="match status" value="1"/>
</dbReference>
<dbReference type="PANTHER" id="PTHR21221">
    <property type="entry name" value="UREIDOGLYCOLATE HYDROLASE"/>
    <property type="match status" value="1"/>
</dbReference>
<dbReference type="PANTHER" id="PTHR21221:SF1">
    <property type="entry name" value="UREIDOGLYCOLATE LYASE"/>
    <property type="match status" value="1"/>
</dbReference>
<dbReference type="Pfam" id="PF04115">
    <property type="entry name" value="Ureidogly_lyase"/>
    <property type="match status" value="1"/>
</dbReference>
<dbReference type="PIRSF" id="PIRSF017306">
    <property type="entry name" value="Ureidogly_hydro"/>
    <property type="match status" value="1"/>
</dbReference>
<dbReference type="SUPFAM" id="SSF51182">
    <property type="entry name" value="RmlC-like cupins"/>
    <property type="match status" value="1"/>
</dbReference>
<accession>A6V7Z0</accession>